<reference key="1">
    <citation type="journal article" date="1990" name="FEBS Lett.">
        <title>Functional expression from cloned cDNAs of glutamate receptor species responsive to kainate and quisqualate.</title>
        <authorList>
            <person name="Sakimura K."/>
            <person name="Bujo H."/>
            <person name="Kushiya E."/>
            <person name="Araki K."/>
            <person name="Yamazaki M."/>
            <person name="Yamazaki M."/>
            <person name="Meguro H."/>
            <person name="Warashina A."/>
            <person name="Numa S."/>
            <person name="Mishina M."/>
        </authorList>
    </citation>
    <scope>NUCLEOTIDE SEQUENCE [MRNA]</scope>
    <scope>SUBUNIT</scope>
    <scope>FUNCTION</scope>
</reference>
<reference key="2">
    <citation type="journal article" date="2003" name="EMBO J.">
        <title>Disruption of the endocytic protein HIP1 results in neurological deficits and decreased AMPA receptor trafficking.</title>
        <authorList>
            <person name="Metzler M."/>
            <person name="Li B."/>
            <person name="Gan L."/>
            <person name="Georgiou J."/>
            <person name="Gutekunst C.A."/>
            <person name="Wang Y."/>
            <person name="Torre E."/>
            <person name="Devon R.S."/>
            <person name="Oh R."/>
            <person name="Legendre-Guillemin V."/>
            <person name="Rich M."/>
            <person name="Alvarez C."/>
            <person name="Gertsenstein M."/>
            <person name="McPherson P.S."/>
            <person name="Nagy A."/>
            <person name="Wang Y.T."/>
            <person name="Roder J.C."/>
            <person name="Raymond L.A."/>
            <person name="Hayden M.R."/>
        </authorList>
    </citation>
    <scope>INTERACTION WITH HIP1</scope>
</reference>
<reference key="3">
    <citation type="journal article" date="2005" name="Neuron">
        <title>Differential regulation of AMPA receptor subunit trafficking by palmitoylation of two distinct sites.</title>
        <authorList>
            <person name="Hayashi T."/>
            <person name="Rumbaugh G."/>
            <person name="Huganir R.L."/>
        </authorList>
    </citation>
    <scope>PALMITOYLATION AT CYS-603 AND CYS-829</scope>
</reference>
<reference key="4">
    <citation type="journal article" date="2006" name="J. Biol. Chem.">
        <title>Age-dependent participation of Ras-GRF proteins in coupling calcium-permeable AMPA glutamate receptors to Ras/Erk signaling in cortical neurons.</title>
        <authorList>
            <person name="Tian X."/>
            <person name="Feig L.A."/>
        </authorList>
    </citation>
    <scope>INTERACTION WITH RASGRF2</scope>
</reference>
<reference key="5">
    <citation type="journal article" date="2006" name="J. Neurochem.">
        <title>Direct interaction of post-synaptic density-95/Dlg/ZO-1 domain-containing synaptic molecule Shank3 with GluR1 alpha-amino-3-hydroxy-5-methyl-4-isoxazole propionic acid receptor.</title>
        <authorList>
            <person name="Uchino S."/>
            <person name="Wada H."/>
            <person name="Honda S."/>
            <person name="Nakamura Y."/>
            <person name="Ondo Y."/>
            <person name="Uchiyama T."/>
            <person name="Tsutsumi M."/>
            <person name="Suzuki E."/>
            <person name="Hirasawa T."/>
            <person name="Kohsaka S."/>
        </authorList>
    </citation>
    <scope>INTERACTION WITH SHANK3</scope>
    <scope>MUTAGENESIS OF 905-THR--LEU-907</scope>
</reference>
<reference key="6">
    <citation type="journal article" date="2008" name="Neuron">
        <title>Accumulation of AMPA receptors in autophagosomes in neuronal axons lacking adaptor protein AP-4.</title>
        <authorList>
            <person name="Matsuda S."/>
            <person name="Miura E."/>
            <person name="Matsuda K."/>
            <person name="Kakegawa W."/>
            <person name="Kohda K."/>
            <person name="Watanabe M."/>
            <person name="Yuzaki M."/>
        </authorList>
    </citation>
    <scope>INTERACTION WITH CACNG3</scope>
    <scope>SUBCELLULAR LOCATION</scope>
</reference>
<reference key="7">
    <citation type="journal article" date="2010" name="Cell">
        <title>A tissue-specific atlas of mouse protein phosphorylation and expression.</title>
        <authorList>
            <person name="Huttlin E.L."/>
            <person name="Jedrychowski M.P."/>
            <person name="Elias J.E."/>
            <person name="Goswami T."/>
            <person name="Rad R."/>
            <person name="Beausoleil S.A."/>
            <person name="Villen J."/>
            <person name="Haas W."/>
            <person name="Sowa M.E."/>
            <person name="Gygi S.P."/>
        </authorList>
    </citation>
    <scope>IDENTIFICATION BY MASS SPECTROMETRY [LARGE SCALE ANALYSIS]</scope>
    <source>
        <tissue>Brain</tissue>
    </source>
</reference>
<reference key="8">
    <citation type="journal article" date="2010" name="Neuron">
        <title>SynDIG1: an activity-regulated, AMPA- receptor-interacting transmembrane protein that regulates excitatory synapse development.</title>
        <authorList>
            <person name="Kalashnikova E."/>
            <person name="Lorca R.A."/>
            <person name="Kaur I."/>
            <person name="Barisone G.A."/>
            <person name="Li B."/>
            <person name="Ishimaru T."/>
            <person name="Trimmer J.S."/>
            <person name="Mohapatra D.P."/>
            <person name="Diaz E."/>
        </authorList>
    </citation>
    <scope>INTERACTION WITH SYNDIG1 AND GRIA2</scope>
</reference>
<reference key="9">
    <citation type="journal article" date="2010" name="Neuron">
        <title>Hippocampal AMPA receptor gating controlled by both TARP and cornichon proteins.</title>
        <authorList>
            <person name="Kato A.S."/>
            <person name="Gill M.B."/>
            <person name="Ho M.T."/>
            <person name="Yu H."/>
            <person name="Tu Y."/>
            <person name="Siuda E.R."/>
            <person name="Wang H."/>
            <person name="Qian Y.W."/>
            <person name="Nisenbaum E.S."/>
            <person name="Tomita S."/>
            <person name="Bredt D.S."/>
        </authorList>
    </citation>
    <scope>SUBCELLULAR LOCATION</scope>
</reference>
<reference key="10">
    <citation type="journal article" date="2013" name="J. Clin. Invest.">
        <title>Endocytosis of synaptic ADAM10 in neuronal plasticity and Alzheimer's disease.</title>
        <authorList>
            <person name="Marcello E."/>
            <person name="Saraceno C."/>
            <person name="Musardo S."/>
            <person name="Vara H."/>
            <person name="de la Fuente A.G."/>
            <person name="Pelucchi S."/>
            <person name="Di Marino D."/>
            <person name="Borroni B."/>
            <person name="Tramontano A."/>
            <person name="Perez-Otano I."/>
            <person name="Padovani A."/>
            <person name="Giustetto M."/>
            <person name="Gardoni F."/>
            <person name="Di Luca M."/>
        </authorList>
    </citation>
    <scope>PHOSPHORYLATION AT SER-863</scope>
</reference>
<reference key="11">
    <citation type="journal article" date="2013" name="Nat. Med.">
        <title>Loss of sorting nexin 27 contributes to excitatory synaptic dysfunction by modulating glutamate receptor recycling in Down's syndrome.</title>
        <authorList>
            <person name="Wang X."/>
            <person name="Zhao Y."/>
            <person name="Zhang X."/>
            <person name="Badie H."/>
            <person name="Zhou Y."/>
            <person name="Mu Y."/>
            <person name="Loo L.S."/>
            <person name="Cai L."/>
            <person name="Thompson R.C."/>
            <person name="Yang B."/>
            <person name="Chen Y."/>
            <person name="Johnson P.F."/>
            <person name="Wu C."/>
            <person name="Bu G."/>
            <person name="Mobley W.C."/>
            <person name="Zhang D."/>
            <person name="Gage F.H."/>
            <person name="Ranscht B."/>
            <person name="Zhang Y.W."/>
            <person name="Lipton S.A."/>
            <person name="Hong W."/>
            <person name="Xu H."/>
        </authorList>
    </citation>
    <scope>INTERACTION WITH SNX27</scope>
</reference>
<reference key="12">
    <citation type="journal article" date="2017" name="Invest. Ophthalmol. Vis. Sci.">
        <title>LRIT3 Differentially Affects Connectivity and Synaptic Transmission of Cones to ON- and OFF-Bipolar Cells.</title>
        <authorList>
            <person name="Neuille M."/>
            <person name="Cao Y."/>
            <person name="Caplette R."/>
            <person name="Guerrero-Given D."/>
            <person name="Thomas C."/>
            <person name="Kamasawa N."/>
            <person name="Sahel J.A."/>
            <person name="Hamel C.P."/>
            <person name="Audo I."/>
            <person name="Picaud S."/>
            <person name="Martemyanov K.A."/>
            <person name="Zeitz C."/>
        </authorList>
    </citation>
    <scope>SUBCELLULAR LOCATION</scope>
    <scope>TISSUE SPECIFICITY</scope>
</reference>
<reference key="13">
    <citation type="journal article" date="2017" name="Sci. Rep.">
        <title>Prevention of long-term memory loss after retrieval by an endogenous CaMKII inhibitor.</title>
        <authorList>
            <person name="Vigil F.A."/>
            <person name="Mizuno K."/>
            <person name="Lucchesi W."/>
            <person name="Valls-Comamala V."/>
            <person name="Giese K.P."/>
        </authorList>
    </citation>
    <scope>SUBCELLULAR LOCATION</scope>
</reference>
<reference key="14">
    <citation type="journal article" date="2019" name="Acta Neuropathol. Commun.">
        <title>Synaptic localization of C9orf72 regulates post-synaptic glutamate receptor 1 levels.</title>
        <authorList>
            <person name="Xiao S."/>
            <person name="McKeever P.M."/>
            <person name="Lau A."/>
            <person name="Robertson J."/>
        </authorList>
    </citation>
    <scope>SUBCELLULAR LOCATION</scope>
    <scope>TISSUE SPECIFICITY</scope>
</reference>
<reference evidence="25 26" key="15">
    <citation type="journal article" date="2021" name="Nature">
        <title>Hippocampal AMPA receptor assemblies and mechanism of allosteric inhibition.</title>
        <authorList>
            <person name="Yu J."/>
            <person name="Rao P."/>
            <person name="Clark S."/>
            <person name="Mitra J."/>
            <person name="Ha T."/>
            <person name="Gouaux E."/>
        </authorList>
    </citation>
    <scope>STRUCTURE BY ELECTRON MICROSCOPY (3.40 ANGSTROMS) IN COMPLEX WITH GRIA2; CNIH2 AND CACNG8</scope>
    <scope>GLYCOSYLATION AT ASN-63 AND ASN-363</scope>
    <scope>DISULFIDE BOND</scope>
    <scope>SUBUNIT</scope>
</reference>
<sequence>MPYIFAFFCTGFLGAVVGANFPNNIQIGGLFPNQQSQEHAAFRFALSQLTEPPKLLPQIDIVNISDSFEMTYRFCSQFSKGVYAIFGFYERRTVNMLTSFCGALHVCFITPSFPVDTSNQFVLQLRPELQEALISIIDHYKWQTFVYIYDADRGLSVLQRVLDTAAEKNWQVTAVNILTTTEEGYRMLFQDLEKKKERLVVVDCESERLNAILGQIVKLEKNGIGYHYILANLGFMDIDLNKFKESGANVTGFQLVNYTDTIPARIMQQWRTSDARDHTRVDWKRPKYTSALTYDGVKVMAEAFQSLRRQRIDISRRGNAGDCLANPAVPWGQGIDIQRALQQVRFEGLTGNVQFNEKGRRTNYTLHVIEMKHDGIRKIGYWNEDDKFVPAATDAQAGGDNSSVQNRTYIVTTILEDPYVMLKKNANQFEGNDRYEGYCVELAAEIAKHVGYSYRLEIVSDGKYGARDPDTKAWNGMVGELVYGRADVAVAPLTITLVREEVIDFSKPFMSLGISIMIKKPQKSKPGVFSFLDPLAYEIWMCIVFAYIGVSVVLFLVSRFSPYEWHSEEFEEGRDQTTSDQSNEFGIFNSLWFSLGAFMQQGCDISPRSLSGRIVGGVWWFFTLIIISSYTANLAAFLTVERMVSPIESAEDLAKQTEIAYGTLEAGSTKEFFRRSKIAVFEKMWTYMKSAEPSVFVRTTEEGMIRVRKSKGKYAYLLESTMNEYIEQRKPCDTMKVGGNLDSKGYGIATPKGSALRGPVNLAVLKLSEQGVLDKLKSKWWYDKGECGSKDSGSKDKTSALSLSNVAGVFYILIGGLGLAMLVALIEFCYKSRSESKRMKGFCLIPQQSINEAIRTSTLPRNSGAGASGGSGSGENGRVVSQDFPKSMQSIPCMSHSSGMPLGATGL</sequence>
<accession>P23818</accession>
<proteinExistence type="evidence at protein level"/>
<organism>
    <name type="scientific">Mus musculus</name>
    <name type="common">Mouse</name>
    <dbReference type="NCBI Taxonomy" id="10090"/>
    <lineage>
        <taxon>Eukaryota</taxon>
        <taxon>Metazoa</taxon>
        <taxon>Chordata</taxon>
        <taxon>Craniata</taxon>
        <taxon>Vertebrata</taxon>
        <taxon>Euteleostomi</taxon>
        <taxon>Mammalia</taxon>
        <taxon>Eutheria</taxon>
        <taxon>Euarchontoglires</taxon>
        <taxon>Glires</taxon>
        <taxon>Rodentia</taxon>
        <taxon>Myomorpha</taxon>
        <taxon>Muroidea</taxon>
        <taxon>Muridae</taxon>
        <taxon>Murinae</taxon>
        <taxon>Mus</taxon>
        <taxon>Mus</taxon>
    </lineage>
</organism>
<protein>
    <recommendedName>
        <fullName evidence="21">Glutamate receptor 1</fullName>
        <shortName>GluR-1</shortName>
    </recommendedName>
    <alternativeName>
        <fullName>AMPA-selective glutamate receptor 1</fullName>
    </alternativeName>
    <alternativeName>
        <fullName evidence="2">GluR-A</fullName>
    </alternativeName>
    <alternativeName>
        <fullName evidence="2">GluR-K1</fullName>
    </alternativeName>
    <alternativeName>
        <fullName>Glutamate receptor ionotropic, AMPA 1</fullName>
        <shortName>GluA1</shortName>
    </alternativeName>
</protein>
<dbReference type="EMBL" id="X57497">
    <property type="protein sequence ID" value="CAA40734.1"/>
    <property type="molecule type" value="mRNA"/>
</dbReference>
<dbReference type="CCDS" id="CCDS48800.1"/>
<dbReference type="PIR" id="S12874">
    <property type="entry name" value="S12874"/>
</dbReference>
<dbReference type="RefSeq" id="NP_001106796.1">
    <property type="nucleotide sequence ID" value="NM_001113325.2"/>
</dbReference>
<dbReference type="PDB" id="7LDD">
    <property type="method" value="EM"/>
    <property type="resolution" value="3.40 A"/>
    <property type="chains" value="A/C=1-907"/>
</dbReference>
<dbReference type="PDB" id="7LDE">
    <property type="method" value="EM"/>
    <property type="resolution" value="3.90 A"/>
    <property type="chains" value="A/C=1-907"/>
</dbReference>
<dbReference type="PDBsum" id="7LDD"/>
<dbReference type="PDBsum" id="7LDE"/>
<dbReference type="EMDB" id="EMD-23283"/>
<dbReference type="EMDB" id="EMD-23284"/>
<dbReference type="EMDB" id="EMD-23285"/>
<dbReference type="EMDB" id="EMD-23286"/>
<dbReference type="EMDB" id="EMD-23292"/>
<dbReference type="SMR" id="P23818"/>
<dbReference type="BioGRID" id="200058">
    <property type="interactions" value="45"/>
</dbReference>
<dbReference type="DIP" id="DIP-31970N"/>
<dbReference type="FunCoup" id="P23818">
    <property type="interactions" value="851"/>
</dbReference>
<dbReference type="IntAct" id="P23818">
    <property type="interactions" value="13"/>
</dbReference>
<dbReference type="MINT" id="P23818"/>
<dbReference type="STRING" id="10090.ENSMUSP00000044494"/>
<dbReference type="BindingDB" id="P23818"/>
<dbReference type="ChEMBL" id="CHEMBL3502"/>
<dbReference type="GlyConnect" id="2341">
    <property type="glycosylation" value="4 N-Linked glycans (3 sites)"/>
</dbReference>
<dbReference type="GlyCosmos" id="P23818">
    <property type="glycosylation" value="6 sites, 4 glycans"/>
</dbReference>
<dbReference type="GlyGen" id="P23818">
    <property type="glycosylation" value="7 sites, 10 N-linked glycans (6 sites), 1 O-linked glycan (1 site)"/>
</dbReference>
<dbReference type="iPTMnet" id="P23818"/>
<dbReference type="PhosphoSitePlus" id="P23818"/>
<dbReference type="SwissPalm" id="P23818"/>
<dbReference type="PaxDb" id="10090-ENSMUSP00000044494"/>
<dbReference type="ProteomicsDB" id="271017"/>
<dbReference type="Pumba" id="P23818"/>
<dbReference type="ABCD" id="P23818">
    <property type="antibodies" value="1 sequenced antibody"/>
</dbReference>
<dbReference type="Antibodypedia" id="28276">
    <property type="antibodies" value="1041 antibodies from 44 providers"/>
</dbReference>
<dbReference type="DNASU" id="14799"/>
<dbReference type="Ensembl" id="ENSMUST00000036315.16">
    <property type="protein sequence ID" value="ENSMUSP00000044494.10"/>
    <property type="gene ID" value="ENSMUSG00000020524.17"/>
</dbReference>
<dbReference type="GeneID" id="14799"/>
<dbReference type="KEGG" id="mmu:14799"/>
<dbReference type="UCSC" id="uc007izs.3">
    <property type="organism name" value="mouse"/>
</dbReference>
<dbReference type="AGR" id="MGI:95808"/>
<dbReference type="CTD" id="2890"/>
<dbReference type="MGI" id="MGI:95808">
    <property type="gene designation" value="Gria1"/>
</dbReference>
<dbReference type="VEuPathDB" id="HostDB:ENSMUSG00000020524"/>
<dbReference type="eggNOG" id="KOG1054">
    <property type="taxonomic scope" value="Eukaryota"/>
</dbReference>
<dbReference type="GeneTree" id="ENSGT00940000157342"/>
<dbReference type="InParanoid" id="P23818"/>
<dbReference type="OrthoDB" id="5984008at2759"/>
<dbReference type="PhylomeDB" id="P23818"/>
<dbReference type="TreeFam" id="TF315232"/>
<dbReference type="Reactome" id="R-MMU-204005">
    <property type="pathway name" value="COPII-mediated vesicle transport"/>
</dbReference>
<dbReference type="Reactome" id="R-MMU-399710">
    <property type="pathway name" value="Activation of AMPA receptors"/>
</dbReference>
<dbReference type="Reactome" id="R-MMU-399719">
    <property type="pathway name" value="Trafficking of AMPA receptors"/>
</dbReference>
<dbReference type="Reactome" id="R-MMU-416993">
    <property type="pathway name" value="Trafficking of GluR2-containing AMPA receptors"/>
</dbReference>
<dbReference type="Reactome" id="R-MMU-438066">
    <property type="pathway name" value="Unblocking of NMDA receptors, glutamate binding and activation"/>
</dbReference>
<dbReference type="Reactome" id="R-MMU-5694530">
    <property type="pathway name" value="Cargo concentration in the ER"/>
</dbReference>
<dbReference type="Reactome" id="R-MMU-8849932">
    <property type="pathway name" value="Synaptic adhesion-like molecules"/>
</dbReference>
<dbReference type="BioGRID-ORCS" id="14799">
    <property type="hits" value="1 hit in 79 CRISPR screens"/>
</dbReference>
<dbReference type="CD-CODE" id="CE726F99">
    <property type="entry name" value="Postsynaptic density"/>
</dbReference>
<dbReference type="ChiTaRS" id="Gria1">
    <property type="organism name" value="mouse"/>
</dbReference>
<dbReference type="PRO" id="PR:P23818"/>
<dbReference type="Proteomes" id="UP000000589">
    <property type="component" value="Chromosome 11"/>
</dbReference>
<dbReference type="RNAct" id="P23818">
    <property type="molecule type" value="protein"/>
</dbReference>
<dbReference type="Bgee" id="ENSMUSG00000020524">
    <property type="expression patterns" value="Expressed in lateral septal nucleus and 135 other cell types or tissues"/>
</dbReference>
<dbReference type="ExpressionAtlas" id="P23818">
    <property type="expression patterns" value="baseline and differential"/>
</dbReference>
<dbReference type="GO" id="GO:0032281">
    <property type="term" value="C:AMPA glutamate receptor complex"/>
    <property type="evidence" value="ECO:0000314"/>
    <property type="project" value="UniProtKB"/>
</dbReference>
<dbReference type="GO" id="GO:0044308">
    <property type="term" value="C:axonal spine"/>
    <property type="evidence" value="ECO:0000314"/>
    <property type="project" value="MGI"/>
</dbReference>
<dbReference type="GO" id="GO:0044297">
    <property type="term" value="C:cell body"/>
    <property type="evidence" value="ECO:0000314"/>
    <property type="project" value="MGI"/>
</dbReference>
<dbReference type="GO" id="GO:0009986">
    <property type="term" value="C:cell surface"/>
    <property type="evidence" value="ECO:0000314"/>
    <property type="project" value="BHF-UCL"/>
</dbReference>
<dbReference type="GO" id="GO:0005911">
    <property type="term" value="C:cell-cell junction"/>
    <property type="evidence" value="ECO:0007669"/>
    <property type="project" value="Ensembl"/>
</dbReference>
<dbReference type="GO" id="GO:0005829">
    <property type="term" value="C:cytosol"/>
    <property type="evidence" value="ECO:0007669"/>
    <property type="project" value="Ensembl"/>
</dbReference>
<dbReference type="GO" id="GO:0030425">
    <property type="term" value="C:dendrite"/>
    <property type="evidence" value="ECO:0000314"/>
    <property type="project" value="UniProtKB"/>
</dbReference>
<dbReference type="GO" id="GO:0032590">
    <property type="term" value="C:dendrite membrane"/>
    <property type="evidence" value="ECO:0000314"/>
    <property type="project" value="BHF-UCL"/>
</dbReference>
<dbReference type="GO" id="GO:0043198">
    <property type="term" value="C:dendritic shaft"/>
    <property type="evidence" value="ECO:0007669"/>
    <property type="project" value="Ensembl"/>
</dbReference>
<dbReference type="GO" id="GO:0043197">
    <property type="term" value="C:dendritic spine"/>
    <property type="evidence" value="ECO:0000314"/>
    <property type="project" value="UniProtKB"/>
</dbReference>
<dbReference type="GO" id="GO:0032591">
    <property type="term" value="C:dendritic spine membrane"/>
    <property type="evidence" value="ECO:0000314"/>
    <property type="project" value="UniProt"/>
</dbReference>
<dbReference type="GO" id="GO:0031901">
    <property type="term" value="C:early endosome membrane"/>
    <property type="evidence" value="ECO:0000250"/>
    <property type="project" value="UniProtKB"/>
</dbReference>
<dbReference type="GO" id="GO:0005783">
    <property type="term" value="C:endoplasmic reticulum"/>
    <property type="evidence" value="ECO:0000314"/>
    <property type="project" value="MGI"/>
</dbReference>
<dbReference type="GO" id="GO:0005789">
    <property type="term" value="C:endoplasmic reticulum membrane"/>
    <property type="evidence" value="ECO:0000250"/>
    <property type="project" value="UniProtKB"/>
</dbReference>
<dbReference type="GO" id="GO:0060076">
    <property type="term" value="C:excitatory synapse"/>
    <property type="evidence" value="ECO:0000314"/>
    <property type="project" value="MGI"/>
</dbReference>
<dbReference type="GO" id="GO:0009897">
    <property type="term" value="C:external side of plasma membrane"/>
    <property type="evidence" value="ECO:0007669"/>
    <property type="project" value="Ensembl"/>
</dbReference>
<dbReference type="GO" id="GO:0098978">
    <property type="term" value="C:glutamatergic synapse"/>
    <property type="evidence" value="ECO:0000314"/>
    <property type="project" value="MGI"/>
</dbReference>
<dbReference type="GO" id="GO:0008328">
    <property type="term" value="C:ionotropic glutamate receptor complex"/>
    <property type="evidence" value="ECO:0000314"/>
    <property type="project" value="BHF-UCL"/>
</dbReference>
<dbReference type="GO" id="GO:0016020">
    <property type="term" value="C:membrane"/>
    <property type="evidence" value="ECO:0000314"/>
    <property type="project" value="MGI"/>
</dbReference>
<dbReference type="GO" id="GO:0031594">
    <property type="term" value="C:neuromuscular junction"/>
    <property type="evidence" value="ECO:0007669"/>
    <property type="project" value="Ensembl"/>
</dbReference>
<dbReference type="GO" id="GO:0043005">
    <property type="term" value="C:neuron projection"/>
    <property type="evidence" value="ECO:0000314"/>
    <property type="project" value="BHF-UCL"/>
</dbReference>
<dbReference type="GO" id="GO:0044309">
    <property type="term" value="C:neuron spine"/>
    <property type="evidence" value="ECO:0000314"/>
    <property type="project" value="BHF-UCL"/>
</dbReference>
<dbReference type="GO" id="GO:0043025">
    <property type="term" value="C:neuronal cell body"/>
    <property type="evidence" value="ECO:0000314"/>
    <property type="project" value="BHF-UCL"/>
</dbReference>
<dbReference type="GO" id="GO:0032809">
    <property type="term" value="C:neuronal cell body membrane"/>
    <property type="evidence" value="ECO:0007669"/>
    <property type="project" value="Ensembl"/>
</dbReference>
<dbReference type="GO" id="GO:0099544">
    <property type="term" value="C:perisynaptic space"/>
    <property type="evidence" value="ECO:0000314"/>
    <property type="project" value="MGI"/>
</dbReference>
<dbReference type="GO" id="GO:0005886">
    <property type="term" value="C:plasma membrane"/>
    <property type="evidence" value="ECO:0000314"/>
    <property type="project" value="BHF-UCL"/>
</dbReference>
<dbReference type="GO" id="GO:0098794">
    <property type="term" value="C:postsynapse"/>
    <property type="evidence" value="ECO:0000314"/>
    <property type="project" value="UniProtKB"/>
</dbReference>
<dbReference type="GO" id="GO:0014069">
    <property type="term" value="C:postsynaptic density"/>
    <property type="evidence" value="ECO:0000314"/>
    <property type="project" value="UniProtKB"/>
</dbReference>
<dbReference type="GO" id="GO:0098839">
    <property type="term" value="C:postsynaptic density membrane"/>
    <property type="evidence" value="ECO:0000314"/>
    <property type="project" value="UniProtKB"/>
</dbReference>
<dbReference type="GO" id="GO:0099092">
    <property type="term" value="C:postsynaptic density, intracellular component"/>
    <property type="evidence" value="ECO:0007669"/>
    <property type="project" value="Ensembl"/>
</dbReference>
<dbReference type="GO" id="GO:0045211">
    <property type="term" value="C:postsynaptic membrane"/>
    <property type="evidence" value="ECO:0000314"/>
    <property type="project" value="BHF-UCL"/>
</dbReference>
<dbReference type="GO" id="GO:0098793">
    <property type="term" value="C:presynapse"/>
    <property type="evidence" value="ECO:0000314"/>
    <property type="project" value="UniProtKB"/>
</dbReference>
<dbReference type="GO" id="GO:0048787">
    <property type="term" value="C:presynaptic active zone membrane"/>
    <property type="evidence" value="ECO:0007669"/>
    <property type="project" value="Ensembl"/>
</dbReference>
<dbReference type="GO" id="GO:1990635">
    <property type="term" value="C:proximal dendrite"/>
    <property type="evidence" value="ECO:0007669"/>
    <property type="project" value="Ensembl"/>
</dbReference>
<dbReference type="GO" id="GO:0055038">
    <property type="term" value="C:recycling endosome membrane"/>
    <property type="evidence" value="ECO:0000250"/>
    <property type="project" value="UniProtKB"/>
</dbReference>
<dbReference type="GO" id="GO:0036477">
    <property type="term" value="C:somatodendritic compartment"/>
    <property type="evidence" value="ECO:0000314"/>
    <property type="project" value="UniProtKB"/>
</dbReference>
<dbReference type="GO" id="GO:0045202">
    <property type="term" value="C:synapse"/>
    <property type="evidence" value="ECO:0000314"/>
    <property type="project" value="UniProtKB"/>
</dbReference>
<dbReference type="GO" id="GO:0097060">
    <property type="term" value="C:synaptic membrane"/>
    <property type="evidence" value="ECO:0000314"/>
    <property type="project" value="UniProtKB"/>
</dbReference>
<dbReference type="GO" id="GO:0008021">
    <property type="term" value="C:synaptic vesicle"/>
    <property type="evidence" value="ECO:0000314"/>
    <property type="project" value="MGI"/>
</dbReference>
<dbReference type="GO" id="GO:0030672">
    <property type="term" value="C:synaptic vesicle membrane"/>
    <property type="evidence" value="ECO:0000314"/>
    <property type="project" value="MGI"/>
</dbReference>
<dbReference type="GO" id="GO:0008179">
    <property type="term" value="F:adenylate cyclase binding"/>
    <property type="evidence" value="ECO:0007669"/>
    <property type="project" value="Ensembl"/>
</dbReference>
<dbReference type="GO" id="GO:0004971">
    <property type="term" value="F:AMPA glutamate receptor activity"/>
    <property type="evidence" value="ECO:0000314"/>
    <property type="project" value="MGI"/>
</dbReference>
<dbReference type="GO" id="GO:0001540">
    <property type="term" value="F:amyloid-beta binding"/>
    <property type="evidence" value="ECO:0007669"/>
    <property type="project" value="Ensembl"/>
</dbReference>
<dbReference type="GO" id="GO:0031698">
    <property type="term" value="F:beta-2 adrenergic receptor binding"/>
    <property type="evidence" value="ECO:0007669"/>
    <property type="project" value="Ensembl"/>
</dbReference>
<dbReference type="GO" id="GO:0001965">
    <property type="term" value="F:G-protein alpha-subunit binding"/>
    <property type="evidence" value="ECO:0007669"/>
    <property type="project" value="Ensembl"/>
</dbReference>
<dbReference type="GO" id="GO:0031681">
    <property type="term" value="F:G-protein beta-subunit binding"/>
    <property type="evidence" value="ECO:0007669"/>
    <property type="project" value="Ensembl"/>
</dbReference>
<dbReference type="GO" id="GO:0035254">
    <property type="term" value="F:glutamate receptor binding"/>
    <property type="evidence" value="ECO:0007669"/>
    <property type="project" value="Ensembl"/>
</dbReference>
<dbReference type="GO" id="GO:0022849">
    <property type="term" value="F:glutamate-gated calcium ion channel activity"/>
    <property type="evidence" value="ECO:0000250"/>
    <property type="project" value="UniProtKB"/>
</dbReference>
<dbReference type="GO" id="GO:0004970">
    <property type="term" value="F:glutamate-gated receptor activity"/>
    <property type="evidence" value="ECO:0000314"/>
    <property type="project" value="UniProtKB"/>
</dbReference>
<dbReference type="GO" id="GO:0042802">
    <property type="term" value="F:identical protein binding"/>
    <property type="evidence" value="ECO:0007669"/>
    <property type="project" value="Ensembl"/>
</dbReference>
<dbReference type="GO" id="GO:0019865">
    <property type="term" value="F:immunoglobulin binding"/>
    <property type="evidence" value="ECO:0007669"/>
    <property type="project" value="Ensembl"/>
</dbReference>
<dbReference type="GO" id="GO:0099507">
    <property type="term" value="F:ligand-gated monoatomic ion channel activity involved in regulation of presynaptic membrane potential"/>
    <property type="evidence" value="ECO:0007669"/>
    <property type="project" value="Ensembl"/>
</dbReference>
<dbReference type="GO" id="GO:0031489">
    <property type="term" value="F:myosin V binding"/>
    <property type="evidence" value="ECO:0007669"/>
    <property type="project" value="Ensembl"/>
</dbReference>
<dbReference type="GO" id="GO:0030165">
    <property type="term" value="F:PDZ domain binding"/>
    <property type="evidence" value="ECO:0007669"/>
    <property type="project" value="Ensembl"/>
</dbReference>
<dbReference type="GO" id="GO:0051428">
    <property type="term" value="F:peptide hormone receptor binding"/>
    <property type="evidence" value="ECO:0007669"/>
    <property type="project" value="Ensembl"/>
</dbReference>
<dbReference type="GO" id="GO:0051018">
    <property type="term" value="F:protein kinase A binding"/>
    <property type="evidence" value="ECO:0007669"/>
    <property type="project" value="Ensembl"/>
</dbReference>
<dbReference type="GO" id="GO:0019901">
    <property type="term" value="F:protein kinase binding"/>
    <property type="evidence" value="ECO:0007669"/>
    <property type="project" value="Ensembl"/>
</dbReference>
<dbReference type="GO" id="GO:0097110">
    <property type="term" value="F:scaffold protein binding"/>
    <property type="evidence" value="ECO:0007669"/>
    <property type="project" value="Ensembl"/>
</dbReference>
<dbReference type="GO" id="GO:0031267">
    <property type="term" value="F:small GTPase binding"/>
    <property type="evidence" value="ECO:0007669"/>
    <property type="project" value="Ensembl"/>
</dbReference>
<dbReference type="GO" id="GO:1904315">
    <property type="term" value="F:transmitter-gated monoatomic ion channel activity involved in regulation of postsynaptic membrane potential"/>
    <property type="evidence" value="ECO:0000314"/>
    <property type="project" value="UniProt"/>
</dbReference>
<dbReference type="GO" id="GO:0048266">
    <property type="term" value="P:behavioral response to pain"/>
    <property type="evidence" value="ECO:0007669"/>
    <property type="project" value="Ensembl"/>
</dbReference>
<dbReference type="GO" id="GO:0071418">
    <property type="term" value="P:cellular response to amine stimulus"/>
    <property type="evidence" value="ECO:0007669"/>
    <property type="project" value="Ensembl"/>
</dbReference>
<dbReference type="GO" id="GO:0071242">
    <property type="term" value="P:cellular response to ammonium ion"/>
    <property type="evidence" value="ECO:0000314"/>
    <property type="project" value="MGI"/>
</dbReference>
<dbReference type="GO" id="GO:1990416">
    <property type="term" value="P:cellular response to brain-derived neurotrophic factor stimulus"/>
    <property type="evidence" value="ECO:0007669"/>
    <property type="project" value="Ensembl"/>
</dbReference>
<dbReference type="GO" id="GO:0071359">
    <property type="term" value="P:cellular response to dsRNA"/>
    <property type="evidence" value="ECO:0007669"/>
    <property type="project" value="Ensembl"/>
</dbReference>
<dbReference type="GO" id="GO:1905232">
    <property type="term" value="P:cellular response to L-glutamate"/>
    <property type="evidence" value="ECO:0007669"/>
    <property type="project" value="Ensembl"/>
</dbReference>
<dbReference type="GO" id="GO:0071375">
    <property type="term" value="P:cellular response to peptide hormone stimulus"/>
    <property type="evidence" value="ECO:0007669"/>
    <property type="project" value="Ensembl"/>
</dbReference>
<dbReference type="GO" id="GO:0021987">
    <property type="term" value="P:cerebral cortex development"/>
    <property type="evidence" value="ECO:0007669"/>
    <property type="project" value="Ensembl"/>
</dbReference>
<dbReference type="GO" id="GO:0007268">
    <property type="term" value="P:chemical synaptic transmission"/>
    <property type="evidence" value="ECO:0000316"/>
    <property type="project" value="MGI"/>
</dbReference>
<dbReference type="GO" id="GO:1990708">
    <property type="term" value="P:conditioned place preference"/>
    <property type="evidence" value="ECO:0007669"/>
    <property type="project" value="Ensembl"/>
</dbReference>
<dbReference type="GO" id="GO:0007616">
    <property type="term" value="P:long-term memory"/>
    <property type="evidence" value="ECO:0000315"/>
    <property type="project" value="UniProtKB"/>
</dbReference>
<dbReference type="GO" id="GO:0060292">
    <property type="term" value="P:long-term synaptic depression"/>
    <property type="evidence" value="ECO:0000316"/>
    <property type="project" value="MGI"/>
</dbReference>
<dbReference type="GO" id="GO:0060291">
    <property type="term" value="P:long-term synaptic potentiation"/>
    <property type="evidence" value="ECO:0007669"/>
    <property type="project" value="Ensembl"/>
</dbReference>
<dbReference type="GO" id="GO:0019228">
    <property type="term" value="P:neuronal action potential"/>
    <property type="evidence" value="ECO:0007669"/>
    <property type="project" value="Ensembl"/>
</dbReference>
<dbReference type="GO" id="GO:2000463">
    <property type="term" value="P:positive regulation of excitatory postsynaptic potential"/>
    <property type="evidence" value="ECO:0007669"/>
    <property type="project" value="Ensembl"/>
</dbReference>
<dbReference type="GO" id="GO:0010628">
    <property type="term" value="P:positive regulation of gene expression"/>
    <property type="evidence" value="ECO:0007669"/>
    <property type="project" value="Ensembl"/>
</dbReference>
<dbReference type="GO" id="GO:0090326">
    <property type="term" value="P:positive regulation of locomotion involved in locomotory behavior"/>
    <property type="evidence" value="ECO:0007669"/>
    <property type="project" value="Ensembl"/>
</dbReference>
<dbReference type="GO" id="GO:0045838">
    <property type="term" value="P:positive regulation of membrane potential"/>
    <property type="evidence" value="ECO:0007669"/>
    <property type="project" value="Ensembl"/>
</dbReference>
<dbReference type="GO" id="GO:0031623">
    <property type="term" value="P:receptor internalization"/>
    <property type="evidence" value="ECO:0000315"/>
    <property type="project" value="UniProtKB"/>
</dbReference>
<dbReference type="GO" id="GO:0034765">
    <property type="term" value="P:regulation of monoatomic ion transmembrane transport"/>
    <property type="evidence" value="ECO:0007669"/>
    <property type="project" value="Ensembl"/>
</dbReference>
<dbReference type="GO" id="GO:0001919">
    <property type="term" value="P:regulation of receptor recycling"/>
    <property type="evidence" value="ECO:0007669"/>
    <property type="project" value="Ensembl"/>
</dbReference>
<dbReference type="GO" id="GO:0046685">
    <property type="term" value="P:response to arsenic-containing substance"/>
    <property type="evidence" value="ECO:0007669"/>
    <property type="project" value="Ensembl"/>
</dbReference>
<dbReference type="GO" id="GO:0042220">
    <property type="term" value="P:response to cocaine"/>
    <property type="evidence" value="ECO:0007669"/>
    <property type="project" value="Ensembl"/>
</dbReference>
<dbReference type="GO" id="GO:0051602">
    <property type="term" value="P:response to electrical stimulus"/>
    <property type="evidence" value="ECO:0007669"/>
    <property type="project" value="Ensembl"/>
</dbReference>
<dbReference type="GO" id="GO:0032355">
    <property type="term" value="P:response to estradiol"/>
    <property type="evidence" value="ECO:0007669"/>
    <property type="project" value="Ensembl"/>
</dbReference>
<dbReference type="GO" id="GO:0045471">
    <property type="term" value="P:response to ethanol"/>
    <property type="evidence" value="ECO:0007669"/>
    <property type="project" value="Ensembl"/>
</dbReference>
<dbReference type="GO" id="GO:0060992">
    <property type="term" value="P:response to fungicide"/>
    <property type="evidence" value="ECO:0007669"/>
    <property type="project" value="Ensembl"/>
</dbReference>
<dbReference type="GO" id="GO:0010226">
    <property type="term" value="P:response to lithium ion"/>
    <property type="evidence" value="ECO:0007669"/>
    <property type="project" value="Ensembl"/>
</dbReference>
<dbReference type="GO" id="GO:0043278">
    <property type="term" value="P:response to morphine"/>
    <property type="evidence" value="ECO:0007669"/>
    <property type="project" value="Ensembl"/>
</dbReference>
<dbReference type="GO" id="GO:0031667">
    <property type="term" value="P:response to nutrient levels"/>
    <property type="evidence" value="ECO:0007669"/>
    <property type="project" value="Ensembl"/>
</dbReference>
<dbReference type="GO" id="GO:1990911">
    <property type="term" value="P:response to psychosocial stress"/>
    <property type="evidence" value="ECO:0007669"/>
    <property type="project" value="Ensembl"/>
</dbReference>
<dbReference type="GO" id="GO:0009744">
    <property type="term" value="P:response to sucrose"/>
    <property type="evidence" value="ECO:0007669"/>
    <property type="project" value="Ensembl"/>
</dbReference>
<dbReference type="GO" id="GO:0009410">
    <property type="term" value="P:response to xenobiotic stimulus"/>
    <property type="evidence" value="ECO:0007669"/>
    <property type="project" value="Ensembl"/>
</dbReference>
<dbReference type="GO" id="GO:0021510">
    <property type="term" value="P:spinal cord development"/>
    <property type="evidence" value="ECO:0007669"/>
    <property type="project" value="Ensembl"/>
</dbReference>
<dbReference type="GO" id="GO:0007416">
    <property type="term" value="P:synapse assembly"/>
    <property type="evidence" value="ECO:0000315"/>
    <property type="project" value="UniProt"/>
</dbReference>
<dbReference type="CDD" id="cd06390">
    <property type="entry name" value="PBP1_iGluR_AMPA_GluR1"/>
    <property type="match status" value="1"/>
</dbReference>
<dbReference type="CDD" id="cd13729">
    <property type="entry name" value="PBP2_iGluR_AMPA_GluR1"/>
    <property type="match status" value="1"/>
</dbReference>
<dbReference type="FunFam" id="1.10.287.70:FF:000067">
    <property type="entry name" value="glutamate receptor 2 isoform X1"/>
    <property type="match status" value="1"/>
</dbReference>
<dbReference type="FunFam" id="3.40.190.10:FF:000001">
    <property type="entry name" value="Glutamate receptor ionotropic, kainate 2"/>
    <property type="match status" value="1"/>
</dbReference>
<dbReference type="FunFam" id="3.40.50.2300:FF:000004">
    <property type="entry name" value="Glutamate receptor, ionotropic, AMPA 2"/>
    <property type="match status" value="1"/>
</dbReference>
<dbReference type="FunFam" id="3.40.190.10:FF:000666">
    <property type="entry name" value="Glutamate receptor, ionotropic, AMPA 2a"/>
    <property type="match status" value="1"/>
</dbReference>
<dbReference type="Gene3D" id="1.10.287.70">
    <property type="match status" value="2"/>
</dbReference>
<dbReference type="Gene3D" id="3.40.50.2300">
    <property type="match status" value="2"/>
</dbReference>
<dbReference type="Gene3D" id="3.40.190.10">
    <property type="entry name" value="Periplasmic binding protein-like II"/>
    <property type="match status" value="2"/>
</dbReference>
<dbReference type="InterPro" id="IPR001828">
    <property type="entry name" value="ANF_lig-bd_rcpt"/>
</dbReference>
<dbReference type="InterPro" id="IPR019594">
    <property type="entry name" value="Glu/Gly-bd"/>
</dbReference>
<dbReference type="InterPro" id="IPR001508">
    <property type="entry name" value="Iono_Glu_rcpt_met"/>
</dbReference>
<dbReference type="InterPro" id="IPR015683">
    <property type="entry name" value="Ionotropic_Glu_rcpt"/>
</dbReference>
<dbReference type="InterPro" id="IPR001320">
    <property type="entry name" value="Iontro_rcpt_C"/>
</dbReference>
<dbReference type="InterPro" id="IPR028082">
    <property type="entry name" value="Peripla_BP_I"/>
</dbReference>
<dbReference type="PANTHER" id="PTHR18966">
    <property type="entry name" value="IONOTROPIC GLUTAMATE RECEPTOR"/>
    <property type="match status" value="1"/>
</dbReference>
<dbReference type="Pfam" id="PF01094">
    <property type="entry name" value="ANF_receptor"/>
    <property type="match status" value="1"/>
</dbReference>
<dbReference type="Pfam" id="PF00060">
    <property type="entry name" value="Lig_chan"/>
    <property type="match status" value="1"/>
</dbReference>
<dbReference type="Pfam" id="PF10613">
    <property type="entry name" value="Lig_chan-Glu_bd"/>
    <property type="match status" value="1"/>
</dbReference>
<dbReference type="PRINTS" id="PR00177">
    <property type="entry name" value="NMDARECEPTOR"/>
</dbReference>
<dbReference type="SMART" id="SM00918">
    <property type="entry name" value="Lig_chan-Glu_bd"/>
    <property type="match status" value="1"/>
</dbReference>
<dbReference type="SMART" id="SM00079">
    <property type="entry name" value="PBPe"/>
    <property type="match status" value="1"/>
</dbReference>
<dbReference type="SUPFAM" id="SSF53822">
    <property type="entry name" value="Periplasmic binding protein-like I"/>
    <property type="match status" value="1"/>
</dbReference>
<dbReference type="SUPFAM" id="SSF53850">
    <property type="entry name" value="Periplasmic binding protein-like II"/>
    <property type="match status" value="1"/>
</dbReference>
<dbReference type="SUPFAM" id="SSF81324">
    <property type="entry name" value="Voltage-gated potassium channels"/>
    <property type="match status" value="1"/>
</dbReference>
<name>GRIA1_MOUSE</name>
<feature type="signal peptide" evidence="5">
    <location>
        <begin position="1"/>
        <end position="18"/>
    </location>
</feature>
<feature type="chain" id="PRO_0000011530" description="Glutamate receptor 1">
    <location>
        <begin position="19"/>
        <end position="907"/>
    </location>
</feature>
<feature type="topological domain" description="Extracellular" evidence="1">
    <location>
        <begin position="19"/>
        <end position="536"/>
    </location>
</feature>
<feature type="transmembrane region" description="Helical" evidence="1">
    <location>
        <begin position="537"/>
        <end position="557"/>
    </location>
</feature>
<feature type="topological domain" description="Cytoplasmic" evidence="1">
    <location>
        <begin position="558"/>
        <end position="584"/>
    </location>
</feature>
<feature type="intramembrane region" description="Helical; Pore-forming" evidence="1">
    <location>
        <begin position="585"/>
        <end position="600"/>
    </location>
</feature>
<feature type="intramembrane region" evidence="1">
    <location>
        <begin position="601"/>
        <end position="603"/>
    </location>
</feature>
<feature type="topological domain" description="Cytoplasmic" evidence="1">
    <location>
        <begin position="604"/>
        <end position="609"/>
    </location>
</feature>
<feature type="transmembrane region" description="Helical" evidence="1">
    <location>
        <begin position="610"/>
        <end position="630"/>
    </location>
</feature>
<feature type="topological domain" description="Extracellular" evidence="1">
    <location>
        <begin position="631"/>
        <end position="805"/>
    </location>
</feature>
<feature type="transmembrane region" description="Helical; Name=M4" evidence="1">
    <location>
        <begin position="806"/>
        <end position="826"/>
    </location>
</feature>
<feature type="topological domain" description="Cytoplasmic" evidence="1">
    <location>
        <begin position="827"/>
        <end position="907"/>
    </location>
</feature>
<feature type="region of interest" description="Disordered" evidence="6">
    <location>
        <begin position="857"/>
        <end position="881"/>
    </location>
</feature>
<feature type="short sequence motif" description="PDZ-binding">
    <location>
        <begin position="904"/>
        <end position="907"/>
    </location>
</feature>
<feature type="compositionally biased region" description="Gly residues" evidence="6">
    <location>
        <begin position="866"/>
        <end position="875"/>
    </location>
</feature>
<feature type="binding site" evidence="4">
    <location>
        <position position="492"/>
    </location>
    <ligand>
        <name>L-glutamate</name>
        <dbReference type="ChEBI" id="CHEBI:29985"/>
    </ligand>
</feature>
<feature type="binding site" evidence="4">
    <location>
        <position position="494"/>
    </location>
    <ligand>
        <name>L-glutamate</name>
        <dbReference type="ChEBI" id="CHEBI:29985"/>
    </ligand>
</feature>
<feature type="binding site" evidence="4">
    <location>
        <position position="499"/>
    </location>
    <ligand>
        <name>L-glutamate</name>
        <dbReference type="ChEBI" id="CHEBI:29985"/>
    </ligand>
</feature>
<feature type="binding site" evidence="4">
    <location>
        <position position="668"/>
    </location>
    <ligand>
        <name>L-glutamate</name>
        <dbReference type="ChEBI" id="CHEBI:29985"/>
    </ligand>
</feature>
<feature type="binding site" evidence="4">
    <location>
        <position position="669"/>
    </location>
    <ligand>
        <name>L-glutamate</name>
        <dbReference type="ChEBI" id="CHEBI:29985"/>
    </ligand>
</feature>
<feature type="binding site" evidence="4">
    <location>
        <position position="719"/>
    </location>
    <ligand>
        <name>L-glutamate</name>
        <dbReference type="ChEBI" id="CHEBI:29985"/>
    </ligand>
</feature>
<feature type="modified residue" description="Phosphoserine" evidence="2">
    <location>
        <position position="645"/>
    </location>
</feature>
<feature type="modified residue" description="Phosphoserine" evidence="2">
    <location>
        <position position="710"/>
    </location>
</feature>
<feature type="modified residue" description="Phosphoserine" evidence="2">
    <location>
        <position position="849"/>
    </location>
</feature>
<feature type="modified residue" description="Phosphoserine" evidence="16">
    <location>
        <position position="863"/>
    </location>
</feature>
<feature type="lipid moiety-binding region" description="S-palmitoyl cysteine" evidence="8">
    <location>
        <position position="603"/>
    </location>
</feature>
<feature type="lipid moiety-binding region" description="S-palmitoyl cysteine" evidence="8">
    <location>
        <position position="829"/>
    </location>
</feature>
<feature type="glycosylation site" description="N-linked (GlcNAc...) asparagine" evidence="20 23 24">
    <location>
        <position position="63"/>
    </location>
</feature>
<feature type="glycosylation site" description="N-linked (GlcNAc...) asparagine" evidence="5">
    <location>
        <position position="249"/>
    </location>
</feature>
<feature type="glycosylation site" description="N-linked (GlcNAc...) asparagine" evidence="5">
    <location>
        <position position="257"/>
    </location>
</feature>
<feature type="glycosylation site" description="N-linked (GlcNAc...) asparagine" evidence="20 23 24">
    <location>
        <position position="363"/>
    </location>
</feature>
<feature type="glycosylation site" description="N-linked (GlcNAc...) asparagine" evidence="5">
    <location>
        <position position="401"/>
    </location>
</feature>
<feature type="glycosylation site" description="N-linked (GlcNAc...) asparagine" evidence="5">
    <location>
        <position position="406"/>
    </location>
</feature>
<feature type="disulfide bond" evidence="20 23 24">
    <location>
        <begin position="75"/>
        <end position="323"/>
    </location>
</feature>
<feature type="disulfide bond" evidence="20 23 24">
    <location>
        <begin position="732"/>
        <end position="787"/>
    </location>
</feature>
<feature type="mutagenesis site" description="Almost abolishes interaction with SHANK3." evidence="10">
    <original>TGL</original>
    <variation>AGA</variation>
    <location>
        <begin position="905"/>
        <end position="907"/>
    </location>
</feature>
<feature type="strand" evidence="27">
    <location>
        <begin position="23"/>
        <end position="32"/>
    </location>
</feature>
<feature type="helix" evidence="27">
    <location>
        <begin position="37"/>
        <end position="48"/>
    </location>
</feature>
<feature type="strand" evidence="27">
    <location>
        <begin position="51"/>
        <end position="61"/>
    </location>
</feature>
<feature type="helix" evidence="27">
    <location>
        <begin position="67"/>
        <end position="78"/>
    </location>
</feature>
<feature type="strand" evidence="27">
    <location>
        <begin position="83"/>
        <end position="87"/>
    </location>
</feature>
<feature type="turn" evidence="27">
    <location>
        <begin position="91"/>
        <end position="93"/>
    </location>
</feature>
<feature type="helix" evidence="27">
    <location>
        <begin position="94"/>
        <end position="104"/>
    </location>
</feature>
<feature type="strand" evidence="27">
    <location>
        <begin position="107"/>
        <end position="110"/>
    </location>
</feature>
<feature type="strand" evidence="27">
    <location>
        <begin position="122"/>
        <end position="124"/>
    </location>
</feature>
<feature type="helix" evidence="27">
    <location>
        <begin position="130"/>
        <end position="140"/>
    </location>
</feature>
<feature type="strand" evidence="27">
    <location>
        <begin position="144"/>
        <end position="149"/>
    </location>
</feature>
<feature type="turn" evidence="27">
    <location>
        <begin position="151"/>
        <end position="155"/>
    </location>
</feature>
<feature type="helix" evidence="27">
    <location>
        <begin position="156"/>
        <end position="168"/>
    </location>
</feature>
<feature type="strand" evidence="27">
    <location>
        <begin position="171"/>
        <end position="176"/>
    </location>
</feature>
<feature type="turn" evidence="27">
    <location>
        <begin position="177"/>
        <end position="179"/>
    </location>
</feature>
<feature type="helix" evidence="27">
    <location>
        <begin position="182"/>
        <end position="192"/>
    </location>
</feature>
<feature type="strand" evidence="27">
    <location>
        <begin position="198"/>
        <end position="203"/>
    </location>
</feature>
<feature type="helix" evidence="27">
    <location>
        <begin position="206"/>
        <end position="216"/>
    </location>
</feature>
<feature type="helix" evidence="27">
    <location>
        <begin position="217"/>
        <end position="219"/>
    </location>
</feature>
<feature type="turn" evidence="27">
    <location>
        <begin position="220"/>
        <end position="222"/>
    </location>
</feature>
<feature type="strand" evidence="27">
    <location>
        <begin position="224"/>
        <end position="230"/>
    </location>
</feature>
<feature type="turn" evidence="27">
    <location>
        <begin position="235"/>
        <end position="237"/>
    </location>
</feature>
<feature type="turn" evidence="27">
    <location>
        <begin position="241"/>
        <end position="243"/>
    </location>
</feature>
<feature type="strand" evidence="27">
    <location>
        <begin position="244"/>
        <end position="246"/>
    </location>
</feature>
<feature type="strand" evidence="27">
    <location>
        <begin position="248"/>
        <end position="254"/>
    </location>
</feature>
<feature type="helix" evidence="27">
    <location>
        <begin position="261"/>
        <end position="276"/>
    </location>
</feature>
<feature type="helix" evidence="27">
    <location>
        <begin position="289"/>
        <end position="309"/>
    </location>
</feature>
<feature type="strand" evidence="27">
    <location>
        <begin position="318"/>
        <end position="320"/>
    </location>
</feature>
<feature type="helix" evidence="27">
    <location>
        <begin position="334"/>
        <end position="343"/>
    </location>
</feature>
<feature type="strand" evidence="27">
    <location>
        <begin position="349"/>
        <end position="351"/>
    </location>
</feature>
<feature type="strand" evidence="27">
    <location>
        <begin position="353"/>
        <end position="355"/>
    </location>
</feature>
<feature type="strand" evidence="27">
    <location>
        <begin position="367"/>
        <end position="372"/>
    </location>
</feature>
<feature type="strand" evidence="27">
    <location>
        <begin position="375"/>
        <end position="381"/>
    </location>
</feature>
<feature type="strand" evidence="27">
    <location>
        <begin position="384"/>
        <end position="387"/>
    </location>
</feature>
<feature type="strand" evidence="27">
    <location>
        <begin position="410"/>
        <end position="413"/>
    </location>
</feature>
<feature type="strand" evidence="27">
    <location>
        <begin position="415"/>
        <end position="422"/>
    </location>
</feature>
<feature type="turn" evidence="27">
    <location>
        <begin position="426"/>
        <end position="428"/>
    </location>
</feature>
<feature type="helix" evidence="27">
    <location>
        <begin position="431"/>
        <end position="433"/>
    </location>
</feature>
<feature type="strand" evidence="27">
    <location>
        <begin position="435"/>
        <end position="437"/>
    </location>
</feature>
<feature type="helix" evidence="27">
    <location>
        <begin position="438"/>
        <end position="450"/>
    </location>
</feature>
<feature type="strand" evidence="27">
    <location>
        <begin position="455"/>
        <end position="458"/>
    </location>
</feature>
<feature type="strand" evidence="27">
    <location>
        <begin position="469"/>
        <end position="471"/>
    </location>
</feature>
<feature type="helix" evidence="27">
    <location>
        <begin position="477"/>
        <end position="482"/>
    </location>
</feature>
<feature type="strand" evidence="27">
    <location>
        <begin position="487"/>
        <end position="489"/>
    </location>
</feature>
<feature type="helix" evidence="27">
    <location>
        <begin position="497"/>
        <end position="500"/>
    </location>
</feature>
<feature type="strand" evidence="27">
    <location>
        <begin position="503"/>
        <end position="505"/>
    </location>
</feature>
<feature type="strand" evidence="27">
    <location>
        <begin position="514"/>
        <end position="519"/>
    </location>
</feature>
<feature type="helix" evidence="27">
    <location>
        <begin position="530"/>
        <end position="532"/>
    </location>
</feature>
<feature type="helix" evidence="27">
    <location>
        <begin position="537"/>
        <end position="557"/>
    </location>
</feature>
<feature type="helix" evidence="27">
    <location>
        <begin position="588"/>
        <end position="598"/>
    </location>
</feature>
<feature type="helix" evidence="27">
    <location>
        <begin position="610"/>
        <end position="642"/>
    </location>
</feature>
<feature type="helix" evidence="27">
    <location>
        <begin position="650"/>
        <end position="655"/>
    </location>
</feature>
<feature type="strand" evidence="27">
    <location>
        <begin position="658"/>
        <end position="667"/>
    </location>
</feature>
<feature type="helix" evidence="27">
    <location>
        <begin position="668"/>
        <end position="674"/>
    </location>
</feature>
<feature type="helix" evidence="27">
    <location>
        <begin position="679"/>
        <end position="689"/>
    </location>
</feature>
<feature type="strand" evidence="27">
    <location>
        <begin position="696"/>
        <end position="699"/>
    </location>
</feature>
<feature type="helix" evidence="27">
    <location>
        <begin position="700"/>
        <end position="710"/>
    </location>
</feature>
<feature type="strand" evidence="27">
    <location>
        <begin position="712"/>
        <end position="719"/>
    </location>
</feature>
<feature type="helix" evidence="27">
    <location>
        <begin position="720"/>
        <end position="728"/>
    </location>
</feature>
<feature type="strand" evidence="27">
    <location>
        <begin position="733"/>
        <end position="738"/>
    </location>
</feature>
<feature type="strand" evidence="27">
    <location>
        <begin position="755"/>
        <end position="757"/>
    </location>
</feature>
<feature type="helix" evidence="27">
    <location>
        <begin position="758"/>
        <end position="769"/>
    </location>
</feature>
<feature type="helix" evidence="27">
    <location>
        <begin position="773"/>
        <end position="781"/>
    </location>
</feature>
<feature type="turn" evidence="27">
    <location>
        <begin position="782"/>
        <end position="784"/>
    </location>
</feature>
<feature type="helix" evidence="27">
    <location>
        <begin position="804"/>
        <end position="806"/>
    </location>
</feature>
<feature type="helix" evidence="27">
    <location>
        <begin position="807"/>
        <end position="829"/>
    </location>
</feature>
<evidence type="ECO:0000250" key="1"/>
<evidence type="ECO:0000250" key="2">
    <source>
        <dbReference type="UniProtKB" id="P19490"/>
    </source>
</evidence>
<evidence type="ECO:0000250" key="3">
    <source>
        <dbReference type="UniProtKB" id="P42261"/>
    </source>
</evidence>
<evidence type="ECO:0000250" key="4">
    <source>
        <dbReference type="UniProtKB" id="P42262"/>
    </source>
</evidence>
<evidence type="ECO:0000255" key="5"/>
<evidence type="ECO:0000256" key="6">
    <source>
        <dbReference type="SAM" id="MobiDB-lite"/>
    </source>
</evidence>
<evidence type="ECO:0000269" key="7">
    <source>
    </source>
</evidence>
<evidence type="ECO:0000269" key="8">
    <source>
    </source>
</evidence>
<evidence type="ECO:0000269" key="9">
    <source>
    </source>
</evidence>
<evidence type="ECO:0000269" key="10">
    <source>
    </source>
</evidence>
<evidence type="ECO:0000269" key="11">
    <source>
    </source>
</evidence>
<evidence type="ECO:0000269" key="12">
    <source>
    </source>
</evidence>
<evidence type="ECO:0000269" key="13">
    <source>
    </source>
</evidence>
<evidence type="ECO:0000269" key="14">
    <source>
    </source>
</evidence>
<evidence type="ECO:0000269" key="15">
    <source>
    </source>
</evidence>
<evidence type="ECO:0000269" key="16">
    <source>
    </source>
</evidence>
<evidence type="ECO:0000269" key="17">
    <source>
    </source>
</evidence>
<evidence type="ECO:0000269" key="18">
    <source>
    </source>
</evidence>
<evidence type="ECO:0000269" key="19">
    <source>
    </source>
</evidence>
<evidence type="ECO:0000269" key="20">
    <source>
    </source>
</evidence>
<evidence type="ECO:0000305" key="21"/>
<evidence type="ECO:0000312" key="22">
    <source>
        <dbReference type="MGI" id="MGI:95808"/>
    </source>
</evidence>
<evidence type="ECO:0000312" key="23">
    <source>
        <dbReference type="PDB" id="7LDD"/>
    </source>
</evidence>
<evidence type="ECO:0000312" key="24">
    <source>
        <dbReference type="PDB" id="7LDE"/>
    </source>
</evidence>
<evidence type="ECO:0007744" key="25">
    <source>
        <dbReference type="PDB" id="7LDD"/>
    </source>
</evidence>
<evidence type="ECO:0007744" key="26">
    <source>
        <dbReference type="PDB" id="7LDE"/>
    </source>
</evidence>
<evidence type="ECO:0007829" key="27">
    <source>
        <dbReference type="PDB" id="7LDD"/>
    </source>
</evidence>
<keyword id="KW-0002">3D-structure</keyword>
<keyword id="KW-1003">Cell membrane</keyword>
<keyword id="KW-0966">Cell projection</keyword>
<keyword id="KW-1015">Disulfide bond</keyword>
<keyword id="KW-0256">Endoplasmic reticulum</keyword>
<keyword id="KW-0967">Endosome</keyword>
<keyword id="KW-0325">Glycoprotein</keyword>
<keyword id="KW-0407">Ion channel</keyword>
<keyword id="KW-0406">Ion transport</keyword>
<keyword id="KW-1071">Ligand-gated ion channel</keyword>
<keyword id="KW-0449">Lipoprotein</keyword>
<keyword id="KW-0472">Membrane</keyword>
<keyword id="KW-0564">Palmitate</keyword>
<keyword id="KW-0597">Phosphoprotein</keyword>
<keyword id="KW-0628">Postsynaptic cell membrane</keyword>
<keyword id="KW-0675">Receptor</keyword>
<keyword id="KW-1185">Reference proteome</keyword>
<keyword id="KW-0732">Signal</keyword>
<keyword id="KW-0770">Synapse</keyword>
<keyword id="KW-0812">Transmembrane</keyword>
<keyword id="KW-1133">Transmembrane helix</keyword>
<keyword id="KW-0813">Transport</keyword>
<comment type="function">
    <text evidence="2 11">Ionotropic glutamate receptor that functions as a ligand-gated cation channel, gated by L-glutamate and glutamatergic agonists such as alpha-amino-3-hydroxy-5-methyl-4-isoxazolepropionic acid (AMPA), quisqualic acid, and kainic acid (PubMed:1699805). L-glutamate acts as an excitatory neurotransmitter at many synapses in the central nervous system. Binding of the excitatory neurotransmitter L-glutamate induces a conformation change, leading to the opening of the cation channel, and thereby converts the chemical signal to an electrical impulse upon entry of monovalent and divalent cations such as sodium and calcium. The receptor then desensitizes rapidly and enters in a transient inactive state, characterized by the presence of bound agonist. In the presence of CACNG2 or CACNG4 or CACNG7 or CACNG8, shows resensitization which is characterized by a delayed accumulation of current flux upon continued application of L-glutamate. Calcium (Ca(2+)) permeability depends on subunits composition and, heteromeric channels containing edited GRIA2 subunit are calcium-impermeable. Also permeable to other divalents cations such as strontium(2+) and magnesium(2+) and monovalent cations such as potassium(1+) and lithium(1+) (By similarity).</text>
</comment>
<comment type="catalytic activity">
    <reaction evidence="2">
        <text>Ca(2+)(in) = Ca(2+)(out)</text>
        <dbReference type="Rhea" id="RHEA:29671"/>
        <dbReference type="ChEBI" id="CHEBI:29108"/>
    </reaction>
</comment>
<comment type="catalytic activity">
    <reaction evidence="2">
        <text>Na(+)(in) = Na(+)(out)</text>
        <dbReference type="Rhea" id="RHEA:34963"/>
        <dbReference type="ChEBI" id="CHEBI:29101"/>
    </reaction>
</comment>
<comment type="catalytic activity">
    <reaction evidence="2">
        <text>Mg(2+)(in) = Mg(2+)(out)</text>
        <dbReference type="Rhea" id="RHEA:29827"/>
        <dbReference type="ChEBI" id="CHEBI:18420"/>
    </reaction>
</comment>
<comment type="catalytic activity">
    <reaction evidence="2">
        <text>Li(+)(in) = Li(+)(out)</text>
        <dbReference type="Rhea" id="RHEA:78551"/>
        <dbReference type="ChEBI" id="CHEBI:49713"/>
    </reaction>
</comment>
<comment type="catalytic activity">
    <reaction evidence="2">
        <text>K(+)(in) = K(+)(out)</text>
        <dbReference type="Rhea" id="RHEA:29463"/>
        <dbReference type="ChEBI" id="CHEBI:29103"/>
    </reaction>
</comment>
<comment type="catalytic activity">
    <reaction evidence="2">
        <text>Sr(2+)(in) = Sr(2+)(out)</text>
        <dbReference type="Rhea" id="RHEA:78679"/>
        <dbReference type="ChEBI" id="CHEBI:35104"/>
    </reaction>
</comment>
<comment type="subunit">
    <text evidence="2 3 7 9 10 11 12 13 15 20">Homotetramer or heterotetramer of pore-forming glutamate receptor subunits (PubMed:1699805, PubMed:33981040). Heteromeric assembly can be the result of both receptor subtype and flip or flop form and according the composition, one partner can be dominant with respect to the fast desensitizing current component, whereas the other can determine the steady-state component (By similarity). Tetramers may be formed by the dimerization of dimers (By similarity). Found in a complex with GRIA2, GRIA3, GRIA4, CNIH2, CNIH3, CACNG2, CACNG3, CACNG4, CACNG5, CACNG7 and CACNG8 (By similarity). Interacts with HIP1 and RASGRF2 (PubMed:12839988, PubMed:16407208). Interacts with SYNDIG1 and GRIA2 (PubMed:20152115). Interacts with DLG1 (via C-terminus). Interacts with LRFN1. Interacts with PRKG2. Interacts with CNIH2 and CACNG2. Interacts with CACNG5; this interaction modulates the gating. Interacts (via C-terminus) with PDLIM4 (via LIM domain); this interaction as well as the interaction of PDLIM4 with alpha-actinin is required for their colocalization in early endosomes. Interacts with SNX27 (via PDZ domain); the interaction is required for recycling to the plasma membrane when endocytosed and prevent degradation in lysosomes (PubMed:23524343). Interacts (via PDZ-binding motif) with SHANK3 (via PDZ domain) (PubMed:16606358). Interacts with CACNG3; associates GRIA1 with the adapter protein complex 4 (AP-4) to target GRIA1 to the somatodendritic compartment of neurons (PubMed:18341993). Interacts with CACNG2; this interaction mediates traffick to the plasma membrane and modulation of desensitization. Interacts with CNIH2 and CNIH3; this interaction promotes expression at the plasma membrane and extensively modulates their gating properties by slowing deactivation and desensitization kinetics (By similarity). Found in a complex with GRIA2, GRIA3, GRIA4, DLG4, CACNG8 and CNIH2 (PubMed:33981040).</text>
</comment>
<comment type="interaction">
    <interactant intactId="EBI-445486">
        <id>P23818</id>
    </interactant>
    <interactant intactId="EBI-770326">
        <id>O88602</id>
        <label>Cacng2</label>
    </interactant>
    <organismsDiffer>false</organismsDiffer>
    <experiments>2</experiments>
</comment>
<comment type="interaction">
    <interactant intactId="EBI-445486">
        <id>P23818</id>
    </interactant>
    <interactant intactId="EBI-77538">
        <id>P23819</id>
        <label>Gria2</label>
    </interactant>
    <organismsDiffer>false</organismsDiffer>
    <experiments>4</experiments>
</comment>
<comment type="subcellular location">
    <subcellularLocation>
        <location evidence="14">Cell membrane</location>
        <topology evidence="14">Multi-pass membrane protein</topology>
    </subcellularLocation>
    <subcellularLocation>
        <location evidence="2">Endoplasmic reticulum membrane</location>
        <topology evidence="2">Multi-pass membrane protein</topology>
    </subcellularLocation>
    <subcellularLocation>
        <location evidence="14 17 19">Postsynaptic cell membrane</location>
        <topology evidence="14">Multi-pass membrane protein</topology>
    </subcellularLocation>
    <subcellularLocation>
        <location evidence="14">Postsynaptic density membrane</location>
        <topology evidence="21">Multi-pass membrane protein</topology>
    </subcellularLocation>
    <subcellularLocation>
        <location evidence="14">Cell projection</location>
        <location evidence="14">Dendrite</location>
    </subcellularLocation>
    <subcellularLocation>
        <location evidence="14">Cell projection</location>
        <location evidence="14">Dendritic spine</location>
    </subcellularLocation>
    <subcellularLocation>
        <location evidence="2">Early endosome membrane</location>
        <topology evidence="2">Multi-pass membrane protein</topology>
    </subcellularLocation>
    <subcellularLocation>
        <location evidence="2">Recycling endosome membrane</location>
        <topology evidence="2">Multi-pass membrane protein</topology>
    </subcellularLocation>
    <subcellularLocation>
        <location evidence="19">Presynapse</location>
    </subcellularLocation>
    <subcellularLocation>
        <location evidence="18">Synapse</location>
    </subcellularLocation>
    <text evidence="2 12 17">Interaction with CACNG2, CNIH2 and CNIH3 promotes cell surface expression. Colocalizes with PDLIM4 in early endosomes. Displays a somatodendritic localization and is excluded from axons in neurons (PubMed:18341993). Localized to cone photoreceptor pedicles (PubMed:28334377).</text>
</comment>
<comment type="tissue specificity">
    <text evidence="17 19">Expressed in the outer plexiform layer of the retina of the eye (at protein level) (PubMed:28334377). Expressed in the forebrain and hippocampus (at protein level) (PubMed:31651360).</text>
</comment>
<comment type="domain">
    <text evidence="3">The M4 transmembrane segment mediates tetramerization and is required for cell surface expression.</text>
</comment>
<comment type="PTM">
    <text evidence="2 16">Phosphorylated at Ser-645. Phosphorylated at Ser-710 by PKC. Phosphorylated at Ser-849 by PKC, PKA and CAMK2. Phosphorylated at Ser-863 by PKC, PKA and PRKG2 (By similarity). Phosphorylation of Ser-863 is reduced by induction of long-term depression and increased by induction of long-term potentiation (PubMed:23676497).</text>
</comment>
<comment type="PTM">
    <text evidence="8">Palmitoylated. Depalmitoylated by CPT1C and upon L-glutamate stimulation. ZDHHC3/GODZ specifically palmitoylates Cys-603, which leads to Golgi retention and decreased cell surface expression (PubMed:16129400). In contrast, Cys-829 palmitoylation does not affect cell surface expression but regulates stimulation-dependent endocytosis (PubMed:16129400).</text>
</comment>
<comment type="miscellaneous">
    <text evidence="2">The postsynaptic actions of L-glutamate are mediated by a variety of receptors that are named according to their selective agonists. This receptor binds AMPA (quisqualate) &gt; L-glutamate &gt; kainate.</text>
</comment>
<comment type="similarity">
    <text evidence="21">Belongs to the glutamate-gated ion channel (TC 1.A.10.1) family. GRIA1 subfamily.</text>
</comment>
<gene>
    <name evidence="22" type="primary">Gria1</name>
    <name evidence="2" type="synonym">Glur1</name>
</gene>